<proteinExistence type="evidence at transcript level"/>
<accession>O80646</accession>
<accession>F4IVX8</accession>
<gene>
    <name type="primary">RPS15AC</name>
    <name type="ordered locus">At2g39590</name>
    <name type="ORF">F12L6.25</name>
</gene>
<keyword id="KW-1185">Reference proteome</keyword>
<keyword id="KW-0687">Ribonucleoprotein</keyword>
<keyword id="KW-0689">Ribosomal protein</keyword>
<comment type="similarity">
    <text evidence="2">Belongs to the universal ribosomal protein uS8 family.</text>
</comment>
<comment type="sequence caution" evidence="2">
    <conflict type="erroneous initiation">
        <sequence resource="EMBL-CDS" id="AAC27850"/>
    </conflict>
    <text>Extended N-terminus.</text>
</comment>
<comment type="sequence caution" evidence="2">
    <conflict type="erroneous initiation">
        <sequence resource="EMBL-CDS" id="ABE65894"/>
    </conflict>
    <text>Extended N-terminus.</text>
</comment>
<feature type="chain" id="PRO_0000250168" description="Small ribosomal subunit protein uS8y">
    <location>
        <begin position="1"/>
        <end position="130"/>
    </location>
</feature>
<protein>
    <recommendedName>
        <fullName evidence="1">Small ribosomal subunit protein uS8y</fullName>
    </recommendedName>
    <alternativeName>
        <fullName>40S ribosomal protein S15a-3</fullName>
    </alternativeName>
</protein>
<reference key="1">
    <citation type="journal article" date="1999" name="Nature">
        <title>Sequence and analysis of chromosome 2 of the plant Arabidopsis thaliana.</title>
        <authorList>
            <person name="Lin X."/>
            <person name="Kaul S."/>
            <person name="Rounsley S.D."/>
            <person name="Shea T.P."/>
            <person name="Benito M.-I."/>
            <person name="Town C.D."/>
            <person name="Fujii C.Y."/>
            <person name="Mason T.M."/>
            <person name="Bowman C.L."/>
            <person name="Barnstead M.E."/>
            <person name="Feldblyum T.V."/>
            <person name="Buell C.R."/>
            <person name="Ketchum K.A."/>
            <person name="Lee J.J."/>
            <person name="Ronning C.M."/>
            <person name="Koo H.L."/>
            <person name="Moffat K.S."/>
            <person name="Cronin L.A."/>
            <person name="Shen M."/>
            <person name="Pai G."/>
            <person name="Van Aken S."/>
            <person name="Umayam L."/>
            <person name="Tallon L.J."/>
            <person name="Gill J.E."/>
            <person name="Adams M.D."/>
            <person name="Carrera A.J."/>
            <person name="Creasy T.H."/>
            <person name="Goodman H.M."/>
            <person name="Somerville C.R."/>
            <person name="Copenhaver G.P."/>
            <person name="Preuss D."/>
            <person name="Nierman W.C."/>
            <person name="White O."/>
            <person name="Eisen J.A."/>
            <person name="Salzberg S.L."/>
            <person name="Fraser C.M."/>
            <person name="Venter J.C."/>
        </authorList>
    </citation>
    <scope>NUCLEOTIDE SEQUENCE [LARGE SCALE GENOMIC DNA]</scope>
    <source>
        <strain>cv. Columbia</strain>
    </source>
</reference>
<reference key="2">
    <citation type="journal article" date="2017" name="Plant J.">
        <title>Araport11: a complete reannotation of the Arabidopsis thaliana reference genome.</title>
        <authorList>
            <person name="Cheng C.Y."/>
            <person name="Krishnakumar V."/>
            <person name="Chan A.P."/>
            <person name="Thibaud-Nissen F."/>
            <person name="Schobel S."/>
            <person name="Town C.D."/>
        </authorList>
    </citation>
    <scope>GENOME REANNOTATION</scope>
    <source>
        <strain>cv. Columbia</strain>
    </source>
</reference>
<reference key="3">
    <citation type="journal article" date="2006" name="Plant Biotechnol. J.">
        <title>Simultaneous high-throughput recombinational cloning of open reading frames in closed and open configurations.</title>
        <authorList>
            <person name="Underwood B.A."/>
            <person name="Vanderhaeghen R."/>
            <person name="Whitford R."/>
            <person name="Town C.D."/>
            <person name="Hilson P."/>
        </authorList>
    </citation>
    <scope>NUCLEOTIDE SEQUENCE [LARGE SCALE MRNA]</scope>
    <source>
        <strain>cv. Columbia</strain>
    </source>
</reference>
<reference key="4">
    <citation type="journal article" date="2001" name="Plant Physiol.">
        <title>The organization of cytoplasmic ribosomal protein genes in the Arabidopsis genome.</title>
        <authorList>
            <person name="Barakat A."/>
            <person name="Szick-Miranda K."/>
            <person name="Chang I.-F."/>
            <person name="Guyot R."/>
            <person name="Blanc G."/>
            <person name="Cooke R."/>
            <person name="Delseny M."/>
            <person name="Bailey-Serres J."/>
        </authorList>
    </citation>
    <scope>GENE FAMILY ORGANIZATION</scope>
    <scope>NOMENCLATURE</scope>
</reference>
<reference key="5">
    <citation type="journal article" date="2023" name="Plant Cell">
        <title>An updated nomenclature for plant ribosomal protein genes.</title>
        <authorList>
            <person name="Scarpin M.R."/>
            <person name="Busche M."/>
            <person name="Martinez R.E."/>
            <person name="Harper L.C."/>
            <person name="Reiser L."/>
            <person name="Szakonyi D."/>
            <person name="Merchante C."/>
            <person name="Lan T."/>
            <person name="Xiong W."/>
            <person name="Mo B."/>
            <person name="Tang G."/>
            <person name="Chen X."/>
            <person name="Bailey-Serres J."/>
            <person name="Browning K.S."/>
            <person name="Brunkard J.O."/>
        </authorList>
    </citation>
    <scope>NOMENCLATURE</scope>
</reference>
<dbReference type="EMBL" id="AC004218">
    <property type="protein sequence ID" value="AAC27850.1"/>
    <property type="status" value="ALT_INIT"/>
    <property type="molecule type" value="Genomic_DNA"/>
</dbReference>
<dbReference type="EMBL" id="CP002685">
    <property type="protein sequence ID" value="AEC09697.2"/>
    <property type="molecule type" value="Genomic_DNA"/>
</dbReference>
<dbReference type="EMBL" id="DQ446609">
    <property type="protein sequence ID" value="ABE65894.1"/>
    <property type="status" value="ALT_INIT"/>
    <property type="molecule type" value="mRNA"/>
</dbReference>
<dbReference type="PIR" id="T00569">
    <property type="entry name" value="T00569"/>
</dbReference>
<dbReference type="RefSeq" id="NP_181491.2">
    <property type="nucleotide sequence ID" value="NM_129517.2"/>
</dbReference>
<dbReference type="SMR" id="O80646"/>
<dbReference type="BioGRID" id="3882">
    <property type="interactions" value="151"/>
</dbReference>
<dbReference type="FunCoup" id="O80646">
    <property type="interactions" value="2550"/>
</dbReference>
<dbReference type="STRING" id="3702.O80646"/>
<dbReference type="PaxDb" id="3702-AT2G39590.1"/>
<dbReference type="ProteomicsDB" id="236551"/>
<dbReference type="EnsemblPlants" id="AT2G39590.1">
    <property type="protein sequence ID" value="AT2G39590.1"/>
    <property type="gene ID" value="AT2G39590"/>
</dbReference>
<dbReference type="GeneID" id="818544"/>
<dbReference type="Gramene" id="AT2G39590.1">
    <property type="protein sequence ID" value="AT2G39590.1"/>
    <property type="gene ID" value="AT2G39590"/>
</dbReference>
<dbReference type="KEGG" id="ath:AT2G39590"/>
<dbReference type="Araport" id="AT2G39590"/>
<dbReference type="TAIR" id="AT2G39590"/>
<dbReference type="eggNOG" id="KOG1754">
    <property type="taxonomic scope" value="Eukaryota"/>
</dbReference>
<dbReference type="HOGENOM" id="CLU_098428_1_1_1"/>
<dbReference type="InParanoid" id="O80646"/>
<dbReference type="OMA" id="QFLTEMM"/>
<dbReference type="OrthoDB" id="723802at2759"/>
<dbReference type="PhylomeDB" id="O80646"/>
<dbReference type="PRO" id="PR:O80646"/>
<dbReference type="Proteomes" id="UP000006548">
    <property type="component" value="Chromosome 2"/>
</dbReference>
<dbReference type="ExpressionAtlas" id="O80646">
    <property type="expression patterns" value="baseline and differential"/>
</dbReference>
<dbReference type="GO" id="GO:1990904">
    <property type="term" value="C:ribonucleoprotein complex"/>
    <property type="evidence" value="ECO:0007669"/>
    <property type="project" value="UniProtKB-KW"/>
</dbReference>
<dbReference type="GO" id="GO:0005840">
    <property type="term" value="C:ribosome"/>
    <property type="evidence" value="ECO:0007669"/>
    <property type="project" value="UniProtKB-KW"/>
</dbReference>
<dbReference type="GO" id="GO:0003735">
    <property type="term" value="F:structural constituent of ribosome"/>
    <property type="evidence" value="ECO:0007669"/>
    <property type="project" value="InterPro"/>
</dbReference>
<dbReference type="GO" id="GO:0006412">
    <property type="term" value="P:translation"/>
    <property type="evidence" value="ECO:0007669"/>
    <property type="project" value="InterPro"/>
</dbReference>
<dbReference type="FunFam" id="3.30.1370.30:FF:000001">
    <property type="entry name" value="40S ribosomal protein S15a"/>
    <property type="match status" value="1"/>
</dbReference>
<dbReference type="FunFam" id="3.30.1490.10:FF:000002">
    <property type="entry name" value="40S ribosomal protein S15a"/>
    <property type="match status" value="1"/>
</dbReference>
<dbReference type="Gene3D" id="3.30.1370.30">
    <property type="match status" value="1"/>
</dbReference>
<dbReference type="Gene3D" id="3.30.1490.10">
    <property type="match status" value="1"/>
</dbReference>
<dbReference type="InterPro" id="IPR000630">
    <property type="entry name" value="Ribosomal_uS8"/>
</dbReference>
<dbReference type="InterPro" id="IPR047863">
    <property type="entry name" value="Ribosomal_uS8_CS"/>
</dbReference>
<dbReference type="InterPro" id="IPR035987">
    <property type="entry name" value="Ribosomal_uS8_sf"/>
</dbReference>
<dbReference type="NCBIfam" id="NF003115">
    <property type="entry name" value="PRK04034.1"/>
    <property type="match status" value="1"/>
</dbReference>
<dbReference type="PANTHER" id="PTHR11758">
    <property type="entry name" value="40S RIBOSOMAL PROTEIN S15A"/>
    <property type="match status" value="1"/>
</dbReference>
<dbReference type="Pfam" id="PF00410">
    <property type="entry name" value="Ribosomal_S8"/>
    <property type="match status" value="1"/>
</dbReference>
<dbReference type="SUPFAM" id="SSF56047">
    <property type="entry name" value="Ribosomal protein S8"/>
    <property type="match status" value="1"/>
</dbReference>
<dbReference type="PROSITE" id="PS00053">
    <property type="entry name" value="RIBOSOMAL_S8"/>
    <property type="match status" value="1"/>
</dbReference>
<sequence>MVRASVLNDCLKSMSNAEKQGKRQVMIRPSSKVIIKFLTVMQKHGYIAEFEYVDDHRSGKIVVELNGRLNNCGVISPRYDLGVKEIEGWTAKLLPSRQFGYIVLTTSAGIMDHEEARKKNVGGKVLGFFY</sequence>
<organism>
    <name type="scientific">Arabidopsis thaliana</name>
    <name type="common">Mouse-ear cress</name>
    <dbReference type="NCBI Taxonomy" id="3702"/>
    <lineage>
        <taxon>Eukaryota</taxon>
        <taxon>Viridiplantae</taxon>
        <taxon>Streptophyta</taxon>
        <taxon>Embryophyta</taxon>
        <taxon>Tracheophyta</taxon>
        <taxon>Spermatophyta</taxon>
        <taxon>Magnoliopsida</taxon>
        <taxon>eudicotyledons</taxon>
        <taxon>Gunneridae</taxon>
        <taxon>Pentapetalae</taxon>
        <taxon>rosids</taxon>
        <taxon>malvids</taxon>
        <taxon>Brassicales</taxon>
        <taxon>Brassicaceae</taxon>
        <taxon>Camelineae</taxon>
        <taxon>Arabidopsis</taxon>
    </lineage>
</organism>
<evidence type="ECO:0000303" key="1">
    <source>
    </source>
</evidence>
<evidence type="ECO:0000305" key="2"/>
<name>R15A3_ARATH</name>